<gene>
    <name type="primary">Adam1a</name>
    <name type="synonym">Adam1</name>
    <name type="synonym">Ftna</name>
</gene>
<organism evidence="11">
    <name type="scientific">Mus musculus</name>
    <name type="common">Mouse</name>
    <dbReference type="NCBI Taxonomy" id="10090"/>
    <lineage>
        <taxon>Eukaryota</taxon>
        <taxon>Metazoa</taxon>
        <taxon>Chordata</taxon>
        <taxon>Craniata</taxon>
        <taxon>Vertebrata</taxon>
        <taxon>Euteleostomi</taxon>
        <taxon>Mammalia</taxon>
        <taxon>Eutheria</taxon>
        <taxon>Euarchontoglires</taxon>
        <taxon>Glires</taxon>
        <taxon>Rodentia</taxon>
        <taxon>Myomorpha</taxon>
        <taxon>Muroidea</taxon>
        <taxon>Muridae</taxon>
        <taxon>Murinae</taxon>
        <taxon>Mus</taxon>
        <taxon>Mus</taxon>
    </lineage>
</organism>
<accession>Q60813</accession>
<accession>Q60617</accession>
<accession>Q80WR7</accession>
<accession>Q8R533</accession>
<keyword id="KW-1015">Disulfide bond</keyword>
<keyword id="KW-0245">EGF-like domain</keyword>
<keyword id="KW-0325">Glycoprotein</keyword>
<keyword id="KW-0378">Hydrolase</keyword>
<keyword id="KW-0472">Membrane</keyword>
<keyword id="KW-0479">Metal-binding</keyword>
<keyword id="KW-0482">Metalloprotease</keyword>
<keyword id="KW-0645">Protease</keyword>
<keyword id="KW-1185">Reference proteome</keyword>
<keyword id="KW-0732">Signal</keyword>
<keyword id="KW-0812">Transmembrane</keyword>
<keyword id="KW-1133">Transmembrane helix</keyword>
<keyword id="KW-0862">Zinc</keyword>
<sequence>MSVAAAGRGFASSLSSPQIRRIALKEAKLTPHIWAALHWNLGLRLVPSVRVGILVLLIFLPSTFCDIGSVYNSSYETVIPERLPGKGGKDPGGKVSYMLLMQGQKQLLHLEVKGHYPENNFPVYSYHNGILRQEMPLLSQDCHYEGYMEGVPGSFVSVNICSGLRGVLIKEETSYGIEPMLSSKNFEHVLYTMEHQPVVSCSVTPKDSPGDTSHPPRSRKPDDLLVLTDWWSHTKYVEMFVVVNHQRFQMWGSNINETVQAVMDIIALANSFTRGINTEVVLVGLEIWTEGDPIEVPVDLQTTLRNFNFWRQEKLVGRVRHDVAHLIVGHRPGENEGQAFLRGACSGEFAAAVEAFHHEDVLLFAALMAHELGHNLGIQHDHPTCTCGPKHFCLMGEKIGKDSGFSNCSSDHFLRFLHDHRGACLLDEPGRQSRMRRAANCGNGVVEDLEECDCGSDCDSHPCCSPTCTLKEGAQCSEGLCCYNCTFKKKGSLCRPAEDVCDLPEYCDGSTQECPANSYMQDGTQCDRIYYCLGGWCKNPDKQCSRIYGYPARSAPEECYISVNTKANRFGNCGHPTSANFRYETCSDEDVFCGKLVCTDVRYLPKVKPLHSLLQVPYGEDWCWSMDAYNITDVPDDGDVQSGTFCAPNKVCMEYICTGRGVLQYNCEPQEMCHGNGVCNNFKHCHCDAGFAPPDCSSPGNGGSVDSGPVGKPADRHLSLSFLAEESPDDKMEDEEVNLKVMVLVVPIFLVVLLCCLMLIAYLWSEVQEVVSPPSSSESSSSSSWSDSDSQ</sequence>
<comment type="function">
    <text evidence="9">May be involved in sperm-egg fusion.</text>
</comment>
<comment type="subunit">
    <text>Heterodimer with ADAM2/fertilin subunit beta.</text>
</comment>
<comment type="subcellular location">
    <subcellularLocation>
        <location evidence="10">Membrane</location>
        <topology evidence="10">Single-pass type I membrane protein</topology>
    </subcellularLocation>
</comment>
<comment type="tissue specificity">
    <text evidence="8">Testis.</text>
</comment>
<comment type="developmental stage">
    <text evidence="8">Expression is low at 20, 22 and 24 days after birth but has increased by day 60.</text>
</comment>
<proteinExistence type="evidence at transcript level"/>
<evidence type="ECO:0000250" key="1"/>
<evidence type="ECO:0000255" key="2"/>
<evidence type="ECO:0000255" key="3">
    <source>
        <dbReference type="PROSITE-ProRule" id="PRU00068"/>
    </source>
</evidence>
<evidence type="ECO:0000255" key="4">
    <source>
        <dbReference type="PROSITE-ProRule" id="PRU00076"/>
    </source>
</evidence>
<evidence type="ECO:0000255" key="5">
    <source>
        <dbReference type="PROSITE-ProRule" id="PRU00276"/>
    </source>
</evidence>
<evidence type="ECO:0000255" key="6">
    <source>
        <dbReference type="PROSITE-ProRule" id="PRU10095"/>
    </source>
</evidence>
<evidence type="ECO:0000256" key="7">
    <source>
        <dbReference type="SAM" id="MobiDB-lite"/>
    </source>
</evidence>
<evidence type="ECO:0000269" key="8">
    <source>
    </source>
</evidence>
<evidence type="ECO:0000269" key="9">
    <source>
    </source>
</evidence>
<evidence type="ECO:0000305" key="10"/>
<evidence type="ECO:0000312" key="11">
    <source>
        <dbReference type="EMBL" id="BAB86768.1"/>
    </source>
</evidence>
<name>ADM1A_MOUSE</name>
<protein>
    <recommendedName>
        <fullName>Disintegrin and metalloproteinase domain-containing protein 1a</fullName>
        <shortName>ADAM 1a</shortName>
        <ecNumber>3.4.24.-</ecNumber>
    </recommendedName>
    <alternativeName>
        <fullName>Fertilin subunit alpha-a</fullName>
    </alternativeName>
</protein>
<feature type="signal peptide" evidence="2">
    <location>
        <begin position="1"/>
        <end position="65"/>
    </location>
</feature>
<feature type="propeptide" id="PRO_0000029032" evidence="2">
    <location>
        <begin position="66"/>
        <end status="unknown"/>
    </location>
</feature>
<feature type="chain" id="PRO_0000029033" description="Disintegrin and metalloproteinase domain-containing protein 1a">
    <location>
        <begin status="unknown"/>
        <end position="791"/>
    </location>
</feature>
<feature type="topological domain" description="Extracellular" evidence="2">
    <location>
        <begin status="unknown"/>
        <end position="740"/>
    </location>
</feature>
<feature type="transmembrane region" description="Helical" evidence="2">
    <location>
        <begin position="741"/>
        <end position="761"/>
    </location>
</feature>
<feature type="topological domain" description="Cytoplasmic" evidence="2">
    <location>
        <begin position="762"/>
        <end position="791"/>
    </location>
</feature>
<feature type="domain" description="Peptidase M12B" evidence="5">
    <location>
        <begin position="235"/>
        <end position="429"/>
    </location>
</feature>
<feature type="domain" description="Disintegrin" evidence="3">
    <location>
        <begin position="438"/>
        <end position="522"/>
    </location>
</feature>
<feature type="domain" description="EGF-like" evidence="4">
    <location>
        <begin position="663"/>
        <end position="697"/>
    </location>
</feature>
<feature type="region of interest" description="Disordered" evidence="7">
    <location>
        <begin position="201"/>
        <end position="220"/>
    </location>
</feature>
<feature type="region of interest" description="Disordered" evidence="7">
    <location>
        <begin position="772"/>
        <end position="791"/>
    </location>
</feature>
<feature type="active site" evidence="5 6">
    <location>
        <position position="371"/>
    </location>
</feature>
<feature type="binding site" evidence="1">
    <location>
        <position position="370"/>
    </location>
    <ligand>
        <name>Zn(2+)</name>
        <dbReference type="ChEBI" id="CHEBI:29105"/>
        <note>catalytic</note>
    </ligand>
</feature>
<feature type="binding site" evidence="1">
    <location>
        <position position="374"/>
    </location>
    <ligand>
        <name>Zn(2+)</name>
        <dbReference type="ChEBI" id="CHEBI:29105"/>
        <note>catalytic</note>
    </ligand>
</feature>
<feature type="binding site" evidence="1">
    <location>
        <position position="380"/>
    </location>
    <ligand>
        <name>Zn(2+)</name>
        <dbReference type="ChEBI" id="CHEBI:29105"/>
        <note>catalytic</note>
    </ligand>
</feature>
<feature type="glycosylation site" description="N-linked (GlcNAc...) asparagine" evidence="2">
    <location>
        <position position="72"/>
    </location>
</feature>
<feature type="glycosylation site" description="N-linked (GlcNAc...) asparagine" evidence="2">
    <location>
        <position position="256"/>
    </location>
</feature>
<feature type="glycosylation site" description="N-linked (GlcNAc...) asparagine" evidence="2">
    <location>
        <position position="407"/>
    </location>
</feature>
<feature type="glycosylation site" description="N-linked (GlcNAc...) asparagine" evidence="2">
    <location>
        <position position="484"/>
    </location>
</feature>
<feature type="glycosylation site" description="N-linked (GlcNAc...) asparagine" evidence="2">
    <location>
        <position position="630"/>
    </location>
</feature>
<feature type="disulfide bond" evidence="1">
    <location>
        <begin position="345"/>
        <end position="424"/>
    </location>
</feature>
<feature type="disulfide bond" evidence="1">
    <location>
        <begin position="385"/>
        <end position="408"/>
    </location>
</feature>
<feature type="disulfide bond" evidence="1">
    <location>
        <begin position="387"/>
        <end position="393"/>
    </location>
</feature>
<feature type="disulfide bond" evidence="1">
    <location>
        <begin position="494"/>
        <end position="514"/>
    </location>
</feature>
<feature type="disulfide bond" evidence="2">
    <location>
        <begin position="667"/>
        <end position="679"/>
    </location>
</feature>
<feature type="disulfide bond" evidence="2">
    <location>
        <begin position="673"/>
        <end position="685"/>
    </location>
</feature>
<feature type="disulfide bond" evidence="2">
    <location>
        <begin position="687"/>
        <end position="696"/>
    </location>
</feature>
<feature type="sequence conflict" description="In Ref. 1; BAB86768." evidence="10" ref="1">
    <original>P</original>
    <variation>S</variation>
    <location>
        <position position="117"/>
    </location>
</feature>
<feature type="sequence conflict" description="In Ref. 3; AAA74920." evidence="10" ref="3">
    <original>T</original>
    <variation>A</variation>
    <location>
        <position position="192"/>
    </location>
</feature>
<feature type="sequence conflict" description="In Ref. 1; BAB86768." evidence="10" ref="1">
    <original>M</original>
    <variation>R</variation>
    <location>
        <position position="395"/>
    </location>
</feature>
<feature type="sequence conflict" description="In Ref. 3; AAA74920." evidence="10" ref="3">
    <original>Y</original>
    <variation>I</variation>
    <location>
        <position position="519"/>
    </location>
</feature>
<feature type="sequence conflict" description="In Ref. 3; AAA74920." evidence="10" ref="3">
    <original>T</original>
    <variation>S</variation>
    <location>
        <position position="644"/>
    </location>
</feature>
<dbReference type="EC" id="3.4.24.-"/>
<dbReference type="EMBL" id="AB048844">
    <property type="protein sequence ID" value="BAB86768.1"/>
    <property type="molecule type" value="Genomic_DNA"/>
</dbReference>
<dbReference type="EMBL" id="BC052093">
    <property type="protein sequence ID" value="AAH52093.1"/>
    <property type="molecule type" value="mRNA"/>
</dbReference>
<dbReference type="EMBL" id="U22056">
    <property type="protein sequence ID" value="AAA74920.1"/>
    <property type="molecule type" value="mRNA"/>
</dbReference>
<dbReference type="EMBL" id="U06144">
    <property type="protein sequence ID" value="AAA18423.1"/>
    <property type="molecule type" value="mRNA"/>
</dbReference>
<dbReference type="CCDS" id="CCDS19637.1"/>
<dbReference type="PIR" id="I48942">
    <property type="entry name" value="I48942"/>
</dbReference>
<dbReference type="RefSeq" id="NP_742124.2">
    <property type="nucleotide sequence ID" value="NM_172126.2"/>
</dbReference>
<dbReference type="SMR" id="Q60813"/>
<dbReference type="CORUM" id="Q60813"/>
<dbReference type="FunCoup" id="Q60813">
    <property type="interactions" value="16"/>
</dbReference>
<dbReference type="STRING" id="10090.ENSMUSP00000098320"/>
<dbReference type="MEROPS" id="M12.202"/>
<dbReference type="GlyCosmos" id="Q60813">
    <property type="glycosylation" value="5 sites, No reported glycans"/>
</dbReference>
<dbReference type="GlyGen" id="Q60813">
    <property type="glycosylation" value="5 sites"/>
</dbReference>
<dbReference type="iPTMnet" id="Q60813"/>
<dbReference type="PhosphoSitePlus" id="Q60813"/>
<dbReference type="SwissPalm" id="Q60813"/>
<dbReference type="PaxDb" id="10090-ENSMUSP00000098320"/>
<dbReference type="ProteomicsDB" id="285727"/>
<dbReference type="DNASU" id="280668"/>
<dbReference type="Ensembl" id="ENSMUST00000100757.6">
    <property type="protein sequence ID" value="ENSMUSP00000098320.5"/>
    <property type="gene ID" value="ENSMUSG00000072647.7"/>
</dbReference>
<dbReference type="GeneID" id="280668"/>
<dbReference type="KEGG" id="mmu:280668"/>
<dbReference type="UCSC" id="uc008zjo.1">
    <property type="organism name" value="mouse"/>
</dbReference>
<dbReference type="AGR" id="MGI:2429504"/>
<dbReference type="CTD" id="8759"/>
<dbReference type="MGI" id="MGI:2429504">
    <property type="gene designation" value="Adam1a"/>
</dbReference>
<dbReference type="VEuPathDB" id="HostDB:ENSMUSG00000072647"/>
<dbReference type="eggNOG" id="KOG3607">
    <property type="taxonomic scope" value="Eukaryota"/>
</dbReference>
<dbReference type="GeneTree" id="ENSGT00940000161891"/>
<dbReference type="HOGENOM" id="CLU_012714_4_0_1"/>
<dbReference type="InParanoid" id="Q60813"/>
<dbReference type="OMA" id="APNKVCT"/>
<dbReference type="OrthoDB" id="5951731at2759"/>
<dbReference type="PhylomeDB" id="Q60813"/>
<dbReference type="TreeFam" id="TF314733"/>
<dbReference type="BRENDA" id="3.4.24.B8">
    <property type="organism ID" value="3474"/>
</dbReference>
<dbReference type="BioGRID-ORCS" id="280668">
    <property type="hits" value="3 hits in 76 CRISPR screens"/>
</dbReference>
<dbReference type="ChiTaRS" id="Adam1b">
    <property type="organism name" value="mouse"/>
</dbReference>
<dbReference type="PRO" id="PR:Q60813"/>
<dbReference type="Proteomes" id="UP000000589">
    <property type="component" value="Chromosome 5"/>
</dbReference>
<dbReference type="RNAct" id="Q60813">
    <property type="molecule type" value="protein"/>
</dbReference>
<dbReference type="Bgee" id="ENSMUSG00000072647">
    <property type="expression patterns" value="Expressed in spermatid and 61 other cell types or tissues"/>
</dbReference>
<dbReference type="ExpressionAtlas" id="Q60813">
    <property type="expression patterns" value="baseline and differential"/>
</dbReference>
<dbReference type="GO" id="GO:0016020">
    <property type="term" value="C:membrane"/>
    <property type="evidence" value="ECO:0000303"/>
    <property type="project" value="UniProtKB"/>
</dbReference>
<dbReference type="GO" id="GO:0045121">
    <property type="term" value="C:membrane raft"/>
    <property type="evidence" value="ECO:0000314"/>
    <property type="project" value="MGI"/>
</dbReference>
<dbReference type="GO" id="GO:0046872">
    <property type="term" value="F:metal ion binding"/>
    <property type="evidence" value="ECO:0007669"/>
    <property type="project" value="UniProtKB-KW"/>
</dbReference>
<dbReference type="GO" id="GO:0004222">
    <property type="term" value="F:metalloendopeptidase activity"/>
    <property type="evidence" value="ECO:0007669"/>
    <property type="project" value="InterPro"/>
</dbReference>
<dbReference type="GO" id="GO:0008237">
    <property type="term" value="F:metallopeptidase activity"/>
    <property type="evidence" value="ECO:0000303"/>
    <property type="project" value="UniProtKB"/>
</dbReference>
<dbReference type="GO" id="GO:0007339">
    <property type="term" value="P:binding of sperm to zona pellucida"/>
    <property type="evidence" value="ECO:0000315"/>
    <property type="project" value="MGI"/>
</dbReference>
<dbReference type="GO" id="GO:0007342">
    <property type="term" value="P:fusion of sperm to egg plasma membrane involved in single fertilization"/>
    <property type="evidence" value="ECO:0000303"/>
    <property type="project" value="UniProtKB"/>
</dbReference>
<dbReference type="GO" id="GO:0006508">
    <property type="term" value="P:proteolysis"/>
    <property type="evidence" value="ECO:0000303"/>
    <property type="project" value="UniProtKB"/>
</dbReference>
<dbReference type="CDD" id="cd04269">
    <property type="entry name" value="ZnMc_adamalysin_II_like"/>
    <property type="match status" value="1"/>
</dbReference>
<dbReference type="FunFam" id="3.40.390.10:FF:000002">
    <property type="entry name" value="Disintegrin and metalloproteinase domain-containing protein 22"/>
    <property type="match status" value="1"/>
</dbReference>
<dbReference type="FunFam" id="4.10.70.10:FF:000001">
    <property type="entry name" value="Disintegrin and metalloproteinase domain-containing protein 22"/>
    <property type="match status" value="1"/>
</dbReference>
<dbReference type="Gene3D" id="3.40.390.10">
    <property type="entry name" value="Collagenase (Catalytic Domain)"/>
    <property type="match status" value="1"/>
</dbReference>
<dbReference type="Gene3D" id="4.10.70.10">
    <property type="entry name" value="Disintegrin domain"/>
    <property type="match status" value="1"/>
</dbReference>
<dbReference type="InterPro" id="IPR006586">
    <property type="entry name" value="ADAM_Cys-rich"/>
</dbReference>
<dbReference type="InterPro" id="IPR018358">
    <property type="entry name" value="Disintegrin_CS"/>
</dbReference>
<dbReference type="InterPro" id="IPR001762">
    <property type="entry name" value="Disintegrin_dom"/>
</dbReference>
<dbReference type="InterPro" id="IPR036436">
    <property type="entry name" value="Disintegrin_dom_sf"/>
</dbReference>
<dbReference type="InterPro" id="IPR000742">
    <property type="entry name" value="EGF-like_dom"/>
</dbReference>
<dbReference type="InterPro" id="IPR024079">
    <property type="entry name" value="MetalloPept_cat_dom_sf"/>
</dbReference>
<dbReference type="InterPro" id="IPR001590">
    <property type="entry name" value="Peptidase_M12B"/>
</dbReference>
<dbReference type="InterPro" id="IPR034027">
    <property type="entry name" value="Reprolysin_adamalysin"/>
</dbReference>
<dbReference type="PANTHER" id="PTHR11905">
    <property type="entry name" value="ADAM A DISINTEGRIN AND METALLOPROTEASE DOMAIN"/>
    <property type="match status" value="1"/>
</dbReference>
<dbReference type="PANTHER" id="PTHR11905:SF120">
    <property type="entry name" value="DISINTEGRIN AND METALLOPROTEINASE DOMAIN-CONTAINING PROTEIN 1A"/>
    <property type="match status" value="1"/>
</dbReference>
<dbReference type="Pfam" id="PF08516">
    <property type="entry name" value="ADAM_CR"/>
    <property type="match status" value="1"/>
</dbReference>
<dbReference type="Pfam" id="PF00200">
    <property type="entry name" value="Disintegrin"/>
    <property type="match status" value="1"/>
</dbReference>
<dbReference type="Pfam" id="PF01421">
    <property type="entry name" value="Reprolysin"/>
    <property type="match status" value="1"/>
</dbReference>
<dbReference type="PRINTS" id="PR00289">
    <property type="entry name" value="DISINTEGRIN"/>
</dbReference>
<dbReference type="SMART" id="SM00608">
    <property type="entry name" value="ACR"/>
    <property type="match status" value="1"/>
</dbReference>
<dbReference type="SMART" id="SM00050">
    <property type="entry name" value="DISIN"/>
    <property type="match status" value="1"/>
</dbReference>
<dbReference type="SUPFAM" id="SSF57552">
    <property type="entry name" value="Blood coagulation inhibitor (disintegrin)"/>
    <property type="match status" value="1"/>
</dbReference>
<dbReference type="SUPFAM" id="SSF55486">
    <property type="entry name" value="Metalloproteases ('zincins'), catalytic domain"/>
    <property type="match status" value="1"/>
</dbReference>
<dbReference type="PROSITE" id="PS50215">
    <property type="entry name" value="ADAM_MEPRO"/>
    <property type="match status" value="1"/>
</dbReference>
<dbReference type="PROSITE" id="PS00427">
    <property type="entry name" value="DISINTEGRIN_1"/>
    <property type="match status" value="1"/>
</dbReference>
<dbReference type="PROSITE" id="PS50214">
    <property type="entry name" value="DISINTEGRIN_2"/>
    <property type="match status" value="1"/>
</dbReference>
<dbReference type="PROSITE" id="PS01186">
    <property type="entry name" value="EGF_2"/>
    <property type="match status" value="1"/>
</dbReference>
<dbReference type="PROSITE" id="PS50026">
    <property type="entry name" value="EGF_3"/>
    <property type="match status" value="1"/>
</dbReference>
<dbReference type="PROSITE" id="PS00142">
    <property type="entry name" value="ZINC_PROTEASE"/>
    <property type="match status" value="1"/>
</dbReference>
<reference evidence="10" key="1">
    <citation type="journal article" date="2002" name="Gene">
        <title>The ADAM1a and ADAM1b genes, instead of the ADAM1 (fertilin alpha) gene, are localized on mouse chromosome 5.</title>
        <authorList>
            <person name="Nishimura H."/>
            <person name="Kim E."/>
            <person name="Fujimori T."/>
            <person name="Kashiwabara S."/>
            <person name="Kuroiwa A."/>
            <person name="Matsuda Y."/>
            <person name="Baba T."/>
        </authorList>
    </citation>
    <scope>NUCLEOTIDE SEQUENCE [GENOMIC DNA]</scope>
    <scope>TISSUE SPECIFICITY</scope>
    <scope>DEVELOPMENTAL STAGE</scope>
</reference>
<reference key="2">
    <citation type="journal article" date="2004" name="Genome Res.">
        <title>The status, quality, and expansion of the NIH full-length cDNA project: the Mammalian Gene Collection (MGC).</title>
        <authorList>
            <consortium name="The MGC Project Team"/>
        </authorList>
    </citation>
    <scope>NUCLEOTIDE SEQUENCE [LARGE SCALE MRNA]</scope>
    <source>
        <strain>C57BL/6J</strain>
        <tissue>Brain</tissue>
    </source>
</reference>
<reference evidence="10" key="3">
    <citation type="journal article" date="1995" name="Dev. Biol.">
        <title>ADAM, a widely distributed and developmentally regulated gene family encoding membrane proteins with a disintegrin and metalloprotease domain.</title>
        <authorList>
            <person name="Wolfsberg T.G."/>
            <person name="Straight P.D."/>
            <person name="Gerena R.L."/>
            <person name="Huovila A.-P."/>
            <person name="Primakoff P."/>
            <person name="Myles D.G."/>
            <person name="White J.M."/>
        </authorList>
    </citation>
    <scope>NUCLEOTIDE SEQUENCE [MRNA] OF 192-791</scope>
    <source>
        <tissue>Testis</tissue>
    </source>
</reference>
<reference evidence="10" key="4">
    <citation type="journal article" date="1994" name="Proc. Natl. Acad. Sci. U.S.A.">
        <title>A family of cellular proteins related to snake venom disintegrins.</title>
        <authorList>
            <person name="Weskamp G."/>
            <person name="Blobel C.P."/>
        </authorList>
    </citation>
    <scope>NUCLEOTIDE SEQUENCE [MRNA] OF 456-499</scope>
    <source>
        <strain>BALB/cJ</strain>
    </source>
</reference>